<sequence length="183" mass="19737">MADSENQGPAEPSQAAAAAEAAAEEVMAEGGAQGGDCDSAAGDPDSAAGEMAEEPQTPAENAPKPKNDFIESLPNSVKCRVLALKKLQKRCDKIEAKFDKEFQALEKKYNDIYKPLLAKIQELTGEMEGCAWTLEGEEEEEEEYEDDEEEGEEEEEEEEAAAEAAAGAKHDDAHAEMPDDAKK</sequence>
<proteinExistence type="evidence at transcript level"/>
<evidence type="ECO:0000255" key="1"/>
<evidence type="ECO:0000256" key="2">
    <source>
        <dbReference type="SAM" id="MobiDB-lite"/>
    </source>
</evidence>
<evidence type="ECO:0000305" key="3"/>
<accession>Q5R4H5</accession>
<protein>
    <recommendedName>
        <fullName>Nucleosome assembly protein 1-like 5</fullName>
    </recommendedName>
</protein>
<name>NP1L5_PONAB</name>
<gene>
    <name type="primary">NAP1L5</name>
</gene>
<comment type="subcellular location">
    <subcellularLocation>
        <location evidence="3">Nucleus</location>
    </subcellularLocation>
</comment>
<comment type="similarity">
    <text evidence="3">Belongs to the nucleosome assembly protein (NAP) family.</text>
</comment>
<organism>
    <name type="scientific">Pongo abelii</name>
    <name type="common">Sumatran orangutan</name>
    <name type="synonym">Pongo pygmaeus abelii</name>
    <dbReference type="NCBI Taxonomy" id="9601"/>
    <lineage>
        <taxon>Eukaryota</taxon>
        <taxon>Metazoa</taxon>
        <taxon>Chordata</taxon>
        <taxon>Craniata</taxon>
        <taxon>Vertebrata</taxon>
        <taxon>Euteleostomi</taxon>
        <taxon>Mammalia</taxon>
        <taxon>Eutheria</taxon>
        <taxon>Euarchontoglires</taxon>
        <taxon>Primates</taxon>
        <taxon>Haplorrhini</taxon>
        <taxon>Catarrhini</taxon>
        <taxon>Hominidae</taxon>
        <taxon>Pongo</taxon>
    </lineage>
</organism>
<reference key="1">
    <citation type="submission" date="2004-11" db="EMBL/GenBank/DDBJ databases">
        <authorList>
            <consortium name="The German cDNA consortium"/>
        </authorList>
    </citation>
    <scope>NUCLEOTIDE SEQUENCE [LARGE SCALE MRNA]</scope>
    <source>
        <tissue>Brain cortex</tissue>
    </source>
</reference>
<dbReference type="EMBL" id="CR861273">
    <property type="protein sequence ID" value="CAH93341.1"/>
    <property type="molecule type" value="mRNA"/>
</dbReference>
<dbReference type="RefSeq" id="NP_001126967.1">
    <property type="nucleotide sequence ID" value="NM_001133495.1"/>
</dbReference>
<dbReference type="SMR" id="Q5R4H5"/>
<dbReference type="FunCoup" id="Q5R4H5">
    <property type="interactions" value="36"/>
</dbReference>
<dbReference type="GeneID" id="100173986"/>
<dbReference type="KEGG" id="pon:100173986"/>
<dbReference type="CTD" id="266812"/>
<dbReference type="InParanoid" id="Q5R4H5"/>
<dbReference type="OrthoDB" id="27325at2759"/>
<dbReference type="Proteomes" id="UP000001595">
    <property type="component" value="Unplaced"/>
</dbReference>
<dbReference type="GO" id="GO:0005634">
    <property type="term" value="C:nucleus"/>
    <property type="evidence" value="ECO:0007669"/>
    <property type="project" value="UniProtKB-SubCell"/>
</dbReference>
<dbReference type="GO" id="GO:0006334">
    <property type="term" value="P:nucleosome assembly"/>
    <property type="evidence" value="ECO:0007669"/>
    <property type="project" value="InterPro"/>
</dbReference>
<dbReference type="FunFam" id="1.20.5.1500:FF:000001">
    <property type="entry name" value="Nucleosome assembly protein 1-like 1"/>
    <property type="match status" value="1"/>
</dbReference>
<dbReference type="Gene3D" id="1.20.5.1500">
    <property type="match status" value="1"/>
</dbReference>
<dbReference type="InterPro" id="IPR037231">
    <property type="entry name" value="NAP-like_sf"/>
</dbReference>
<dbReference type="InterPro" id="IPR002164">
    <property type="entry name" value="NAP_family"/>
</dbReference>
<dbReference type="PANTHER" id="PTHR11875">
    <property type="entry name" value="TESTIS-SPECIFIC Y-ENCODED PROTEIN"/>
    <property type="match status" value="1"/>
</dbReference>
<dbReference type="Pfam" id="PF00956">
    <property type="entry name" value="NAP"/>
    <property type="match status" value="1"/>
</dbReference>
<dbReference type="SUPFAM" id="SSF143113">
    <property type="entry name" value="NAP-like"/>
    <property type="match status" value="1"/>
</dbReference>
<feature type="chain" id="PRO_0000317144" description="Nucleosome assembly protein 1-like 5">
    <location>
        <begin position="1"/>
        <end position="183"/>
    </location>
</feature>
<feature type="region of interest" description="Disordered" evidence="2">
    <location>
        <begin position="1"/>
        <end position="71"/>
    </location>
</feature>
<feature type="region of interest" description="Disordered" evidence="2">
    <location>
        <begin position="135"/>
        <end position="183"/>
    </location>
</feature>
<feature type="coiled-coil region" evidence="1">
    <location>
        <begin position="81"/>
        <end position="107"/>
    </location>
</feature>
<feature type="compositionally biased region" description="Low complexity" evidence="2">
    <location>
        <begin position="7"/>
        <end position="21"/>
    </location>
</feature>
<feature type="compositionally biased region" description="Low complexity" evidence="2">
    <location>
        <begin position="28"/>
        <end position="49"/>
    </location>
</feature>
<feature type="compositionally biased region" description="Acidic residues" evidence="2">
    <location>
        <begin position="135"/>
        <end position="161"/>
    </location>
</feature>
<feature type="compositionally biased region" description="Basic and acidic residues" evidence="2">
    <location>
        <begin position="168"/>
        <end position="183"/>
    </location>
</feature>
<keyword id="KW-0175">Coiled coil</keyword>
<keyword id="KW-0539">Nucleus</keyword>
<keyword id="KW-1185">Reference proteome</keyword>